<feature type="chain" id="PRO_0000106205" description="Nucleotide-binding protein VP1617">
    <location>
        <begin position="1"/>
        <end position="160"/>
    </location>
</feature>
<comment type="function">
    <text evidence="1">Nucleotide-binding protein.</text>
</comment>
<comment type="similarity">
    <text evidence="1">Belongs to the YajQ family.</text>
</comment>
<organism>
    <name type="scientific">Vibrio parahaemolyticus serotype O3:K6 (strain RIMD 2210633)</name>
    <dbReference type="NCBI Taxonomy" id="223926"/>
    <lineage>
        <taxon>Bacteria</taxon>
        <taxon>Pseudomonadati</taxon>
        <taxon>Pseudomonadota</taxon>
        <taxon>Gammaproteobacteria</taxon>
        <taxon>Vibrionales</taxon>
        <taxon>Vibrionaceae</taxon>
        <taxon>Vibrio</taxon>
    </lineage>
</organism>
<keyword id="KW-0547">Nucleotide-binding</keyword>
<gene>
    <name type="ordered locus">VP1617</name>
</gene>
<reference key="1">
    <citation type="journal article" date="2003" name="Lancet">
        <title>Genome sequence of Vibrio parahaemolyticus: a pathogenic mechanism distinct from that of V. cholerae.</title>
        <authorList>
            <person name="Makino K."/>
            <person name="Oshima K."/>
            <person name="Kurokawa K."/>
            <person name="Yokoyama K."/>
            <person name="Uda T."/>
            <person name="Tagomori K."/>
            <person name="Iijima Y."/>
            <person name="Najima M."/>
            <person name="Nakano M."/>
            <person name="Yamashita A."/>
            <person name="Kubota Y."/>
            <person name="Kimura S."/>
            <person name="Yasunaga T."/>
            <person name="Honda T."/>
            <person name="Shinagawa H."/>
            <person name="Hattori M."/>
            <person name="Iida T."/>
        </authorList>
    </citation>
    <scope>NUCLEOTIDE SEQUENCE [LARGE SCALE GENOMIC DNA]</scope>
    <source>
        <strain>RIMD 2210633</strain>
    </source>
</reference>
<evidence type="ECO:0000255" key="1">
    <source>
        <dbReference type="HAMAP-Rule" id="MF_00632"/>
    </source>
</evidence>
<sequence>MPSFDIVSEIDTVELRNAVDNANRELSTRFDFRNVNASFELVEENVKVSAEGDFQLKQMRDILRGHLAKRNVDANAMDAQNPEVTGKNWHQNILFRQGIDTPTAKKLVKLIKDAKLKVQASIQGDKVRVTGKKRDDLQATIAAIREAELGQPFQFNNFRD</sequence>
<proteinExistence type="inferred from homology"/>
<accession>P59562</accession>
<dbReference type="EMBL" id="BA000031">
    <property type="protein sequence ID" value="BAC59880.1"/>
    <property type="molecule type" value="Genomic_DNA"/>
</dbReference>
<dbReference type="RefSeq" id="NP_797996.1">
    <property type="nucleotide sequence ID" value="NC_004603.1"/>
</dbReference>
<dbReference type="RefSeq" id="WP_005457116.1">
    <property type="nucleotide sequence ID" value="NC_004603.1"/>
</dbReference>
<dbReference type="SMR" id="P59562"/>
<dbReference type="GeneID" id="1189124"/>
<dbReference type="KEGG" id="vpa:VP1617"/>
<dbReference type="PATRIC" id="fig|223926.6.peg.1540"/>
<dbReference type="eggNOG" id="COG1666">
    <property type="taxonomic scope" value="Bacteria"/>
</dbReference>
<dbReference type="HOGENOM" id="CLU_099839_1_0_6"/>
<dbReference type="Proteomes" id="UP000002493">
    <property type="component" value="Chromosome 1"/>
</dbReference>
<dbReference type="GO" id="GO:0005829">
    <property type="term" value="C:cytosol"/>
    <property type="evidence" value="ECO:0007669"/>
    <property type="project" value="TreeGrafter"/>
</dbReference>
<dbReference type="GO" id="GO:0000166">
    <property type="term" value="F:nucleotide binding"/>
    <property type="evidence" value="ECO:0007669"/>
    <property type="project" value="TreeGrafter"/>
</dbReference>
<dbReference type="CDD" id="cd11740">
    <property type="entry name" value="YajQ_like"/>
    <property type="match status" value="1"/>
</dbReference>
<dbReference type="FunFam" id="3.30.70.860:FF:000001">
    <property type="entry name" value="UPF0234 protein YajQ"/>
    <property type="match status" value="1"/>
</dbReference>
<dbReference type="Gene3D" id="3.30.70.860">
    <property type="match status" value="1"/>
</dbReference>
<dbReference type="Gene3D" id="3.30.70.990">
    <property type="entry name" value="YajQ-like, domain 2"/>
    <property type="match status" value="1"/>
</dbReference>
<dbReference type="HAMAP" id="MF_00632">
    <property type="entry name" value="YajQ"/>
    <property type="match status" value="1"/>
</dbReference>
<dbReference type="InterPro" id="IPR007551">
    <property type="entry name" value="DUF520"/>
</dbReference>
<dbReference type="InterPro" id="IPR035571">
    <property type="entry name" value="UPF0234-like_C"/>
</dbReference>
<dbReference type="InterPro" id="IPR035570">
    <property type="entry name" value="UPF0234_N"/>
</dbReference>
<dbReference type="InterPro" id="IPR036183">
    <property type="entry name" value="YajQ-like_sf"/>
</dbReference>
<dbReference type="NCBIfam" id="NF003819">
    <property type="entry name" value="PRK05412.1"/>
    <property type="match status" value="1"/>
</dbReference>
<dbReference type="PANTHER" id="PTHR30476">
    <property type="entry name" value="UPF0234 PROTEIN YAJQ"/>
    <property type="match status" value="1"/>
</dbReference>
<dbReference type="PANTHER" id="PTHR30476:SF0">
    <property type="entry name" value="UPF0234 PROTEIN YAJQ"/>
    <property type="match status" value="1"/>
</dbReference>
<dbReference type="Pfam" id="PF04461">
    <property type="entry name" value="DUF520"/>
    <property type="match status" value="1"/>
</dbReference>
<dbReference type="SUPFAM" id="SSF89963">
    <property type="entry name" value="YajQ-like"/>
    <property type="match status" value="2"/>
</dbReference>
<protein>
    <recommendedName>
        <fullName evidence="1">Nucleotide-binding protein VP1617</fullName>
    </recommendedName>
</protein>
<name>Y1617_VIBPA</name>